<evidence type="ECO:0000255" key="1">
    <source>
        <dbReference type="HAMAP-Rule" id="MF_00382"/>
    </source>
</evidence>
<evidence type="ECO:0000305" key="2"/>
<keyword id="KW-1185">Reference proteome</keyword>
<keyword id="KW-0687">Ribonucleoprotein</keyword>
<keyword id="KW-0689">Ribosomal protein</keyword>
<keyword id="KW-0694">RNA-binding</keyword>
<keyword id="KW-0699">rRNA-binding</keyword>
<comment type="function">
    <text evidence="1">Binds directly to 23S ribosomal RNA and is necessary for the in vitro assembly process of the 50S ribosomal subunit. It is not involved in the protein synthesizing functions of that subunit.</text>
</comment>
<comment type="similarity">
    <text evidence="1">Belongs to the bacterial ribosomal protein bL20 family.</text>
</comment>
<accession>B8H308</accession>
<feature type="chain" id="PRO_1000193946" description="Large ribosomal subunit protein bL20">
    <location>
        <begin position="1"/>
        <end position="118"/>
    </location>
</feature>
<gene>
    <name evidence="1" type="primary">rplT</name>
    <name type="ordered locus">CCNA_01097</name>
</gene>
<organism>
    <name type="scientific">Caulobacter vibrioides (strain NA1000 / CB15N)</name>
    <name type="common">Caulobacter crescentus</name>
    <dbReference type="NCBI Taxonomy" id="565050"/>
    <lineage>
        <taxon>Bacteria</taxon>
        <taxon>Pseudomonadati</taxon>
        <taxon>Pseudomonadota</taxon>
        <taxon>Alphaproteobacteria</taxon>
        <taxon>Caulobacterales</taxon>
        <taxon>Caulobacteraceae</taxon>
        <taxon>Caulobacter</taxon>
    </lineage>
</organism>
<proteinExistence type="inferred from homology"/>
<reference key="1">
    <citation type="journal article" date="2010" name="J. Bacteriol.">
        <title>The genetic basis of laboratory adaptation in Caulobacter crescentus.</title>
        <authorList>
            <person name="Marks M.E."/>
            <person name="Castro-Rojas C.M."/>
            <person name="Teiling C."/>
            <person name="Du L."/>
            <person name="Kapatral V."/>
            <person name="Walunas T.L."/>
            <person name="Crosson S."/>
        </authorList>
    </citation>
    <scope>NUCLEOTIDE SEQUENCE [LARGE SCALE GENOMIC DNA]</scope>
    <source>
        <strain>NA1000 / CB15N</strain>
    </source>
</reference>
<name>RL20_CAUVN</name>
<protein>
    <recommendedName>
        <fullName evidence="1">Large ribosomal subunit protein bL20</fullName>
    </recommendedName>
    <alternativeName>
        <fullName evidence="2">50S ribosomal protein L20</fullName>
    </alternativeName>
</protein>
<sequence length="118" mass="13152">MARVKRGVVAHAKHKKVLEQAKGFYGRRKNTIRTAKAAVDKAGQYAYRDRKVRKRAFRSLWIQRINAGARLEGFTYSQFIHGLDVAGIVMDRKVLADIAGNDPAAFKAIADKVRAALA</sequence>
<dbReference type="EMBL" id="CP001340">
    <property type="protein sequence ID" value="ACL94562.1"/>
    <property type="molecule type" value="Genomic_DNA"/>
</dbReference>
<dbReference type="RefSeq" id="WP_010918929.1">
    <property type="nucleotide sequence ID" value="NC_011916.1"/>
</dbReference>
<dbReference type="RefSeq" id="YP_002516470.1">
    <property type="nucleotide sequence ID" value="NC_011916.1"/>
</dbReference>
<dbReference type="SMR" id="B8H308"/>
<dbReference type="GeneID" id="7331466"/>
<dbReference type="KEGG" id="ccs:CCNA_01097"/>
<dbReference type="PATRIC" id="fig|565050.3.peg.1079"/>
<dbReference type="HOGENOM" id="CLU_123265_0_1_5"/>
<dbReference type="OrthoDB" id="9808966at2"/>
<dbReference type="PhylomeDB" id="B8H308"/>
<dbReference type="Proteomes" id="UP000001364">
    <property type="component" value="Chromosome"/>
</dbReference>
<dbReference type="GO" id="GO:1990904">
    <property type="term" value="C:ribonucleoprotein complex"/>
    <property type="evidence" value="ECO:0007669"/>
    <property type="project" value="UniProtKB-KW"/>
</dbReference>
<dbReference type="GO" id="GO:0005840">
    <property type="term" value="C:ribosome"/>
    <property type="evidence" value="ECO:0007669"/>
    <property type="project" value="UniProtKB-KW"/>
</dbReference>
<dbReference type="GO" id="GO:0019843">
    <property type="term" value="F:rRNA binding"/>
    <property type="evidence" value="ECO:0007669"/>
    <property type="project" value="UniProtKB-UniRule"/>
</dbReference>
<dbReference type="GO" id="GO:0003735">
    <property type="term" value="F:structural constituent of ribosome"/>
    <property type="evidence" value="ECO:0007669"/>
    <property type="project" value="InterPro"/>
</dbReference>
<dbReference type="GO" id="GO:0000027">
    <property type="term" value="P:ribosomal large subunit assembly"/>
    <property type="evidence" value="ECO:0007669"/>
    <property type="project" value="UniProtKB-UniRule"/>
</dbReference>
<dbReference type="GO" id="GO:0006412">
    <property type="term" value="P:translation"/>
    <property type="evidence" value="ECO:0007669"/>
    <property type="project" value="InterPro"/>
</dbReference>
<dbReference type="CDD" id="cd07026">
    <property type="entry name" value="Ribosomal_L20"/>
    <property type="match status" value="1"/>
</dbReference>
<dbReference type="FunFam" id="1.10.1900.20:FF:000001">
    <property type="entry name" value="50S ribosomal protein L20"/>
    <property type="match status" value="1"/>
</dbReference>
<dbReference type="Gene3D" id="6.10.160.10">
    <property type="match status" value="1"/>
</dbReference>
<dbReference type="Gene3D" id="1.10.1900.20">
    <property type="entry name" value="Ribosomal protein L20"/>
    <property type="match status" value="1"/>
</dbReference>
<dbReference type="HAMAP" id="MF_00382">
    <property type="entry name" value="Ribosomal_bL20"/>
    <property type="match status" value="1"/>
</dbReference>
<dbReference type="InterPro" id="IPR005813">
    <property type="entry name" value="Ribosomal_bL20"/>
</dbReference>
<dbReference type="InterPro" id="IPR049946">
    <property type="entry name" value="RIBOSOMAL_L20_CS"/>
</dbReference>
<dbReference type="InterPro" id="IPR035566">
    <property type="entry name" value="Ribosomal_protein_bL20_C"/>
</dbReference>
<dbReference type="NCBIfam" id="TIGR01032">
    <property type="entry name" value="rplT_bact"/>
    <property type="match status" value="1"/>
</dbReference>
<dbReference type="PANTHER" id="PTHR10986">
    <property type="entry name" value="39S RIBOSOMAL PROTEIN L20"/>
    <property type="match status" value="1"/>
</dbReference>
<dbReference type="Pfam" id="PF00453">
    <property type="entry name" value="Ribosomal_L20"/>
    <property type="match status" value="1"/>
</dbReference>
<dbReference type="PRINTS" id="PR00062">
    <property type="entry name" value="RIBOSOMALL20"/>
</dbReference>
<dbReference type="SUPFAM" id="SSF74731">
    <property type="entry name" value="Ribosomal protein L20"/>
    <property type="match status" value="1"/>
</dbReference>
<dbReference type="PROSITE" id="PS00937">
    <property type="entry name" value="RIBOSOMAL_L20"/>
    <property type="match status" value="1"/>
</dbReference>